<dbReference type="EC" id="2.4.2.10" evidence="1"/>
<dbReference type="EMBL" id="CU928145">
    <property type="protein sequence ID" value="CAV00649.1"/>
    <property type="molecule type" value="Genomic_DNA"/>
</dbReference>
<dbReference type="RefSeq" id="WP_000806177.1">
    <property type="nucleotide sequence ID" value="NZ_CP028304.1"/>
</dbReference>
<dbReference type="SMR" id="B7L766"/>
<dbReference type="GeneID" id="75202211"/>
<dbReference type="KEGG" id="eck:EC55989_4107"/>
<dbReference type="HOGENOM" id="CLU_074878_0_1_6"/>
<dbReference type="UniPathway" id="UPA00070">
    <property type="reaction ID" value="UER00119"/>
</dbReference>
<dbReference type="Proteomes" id="UP000000746">
    <property type="component" value="Chromosome"/>
</dbReference>
<dbReference type="GO" id="GO:0005737">
    <property type="term" value="C:cytoplasm"/>
    <property type="evidence" value="ECO:0007669"/>
    <property type="project" value="TreeGrafter"/>
</dbReference>
<dbReference type="GO" id="GO:0000287">
    <property type="term" value="F:magnesium ion binding"/>
    <property type="evidence" value="ECO:0007669"/>
    <property type="project" value="UniProtKB-UniRule"/>
</dbReference>
<dbReference type="GO" id="GO:0004588">
    <property type="term" value="F:orotate phosphoribosyltransferase activity"/>
    <property type="evidence" value="ECO:0007669"/>
    <property type="project" value="UniProtKB-UniRule"/>
</dbReference>
<dbReference type="GO" id="GO:0006207">
    <property type="term" value="P:'de novo' pyrimidine nucleobase biosynthetic process"/>
    <property type="evidence" value="ECO:0007669"/>
    <property type="project" value="TreeGrafter"/>
</dbReference>
<dbReference type="GO" id="GO:0044205">
    <property type="term" value="P:'de novo' UMP biosynthetic process"/>
    <property type="evidence" value="ECO:0007669"/>
    <property type="project" value="UniProtKB-UniRule"/>
</dbReference>
<dbReference type="GO" id="GO:0046132">
    <property type="term" value="P:pyrimidine ribonucleoside biosynthetic process"/>
    <property type="evidence" value="ECO:0007669"/>
    <property type="project" value="TreeGrafter"/>
</dbReference>
<dbReference type="CDD" id="cd06223">
    <property type="entry name" value="PRTases_typeI"/>
    <property type="match status" value="1"/>
</dbReference>
<dbReference type="FunFam" id="3.40.50.2020:FF:000008">
    <property type="entry name" value="Orotate phosphoribosyltransferase"/>
    <property type="match status" value="1"/>
</dbReference>
<dbReference type="Gene3D" id="3.40.50.2020">
    <property type="match status" value="1"/>
</dbReference>
<dbReference type="HAMAP" id="MF_01208">
    <property type="entry name" value="PyrE"/>
    <property type="match status" value="1"/>
</dbReference>
<dbReference type="InterPro" id="IPR023031">
    <property type="entry name" value="OPRT"/>
</dbReference>
<dbReference type="InterPro" id="IPR004467">
    <property type="entry name" value="Or_phspho_trans_dom"/>
</dbReference>
<dbReference type="InterPro" id="IPR000836">
    <property type="entry name" value="PRibTrfase_dom"/>
</dbReference>
<dbReference type="InterPro" id="IPR029057">
    <property type="entry name" value="PRTase-like"/>
</dbReference>
<dbReference type="NCBIfam" id="TIGR00336">
    <property type="entry name" value="pyrE"/>
    <property type="match status" value="1"/>
</dbReference>
<dbReference type="PANTHER" id="PTHR46683">
    <property type="entry name" value="OROTATE PHOSPHORIBOSYLTRANSFERASE 1-RELATED"/>
    <property type="match status" value="1"/>
</dbReference>
<dbReference type="PANTHER" id="PTHR46683:SF1">
    <property type="entry name" value="OROTATE PHOSPHORIBOSYLTRANSFERASE 1-RELATED"/>
    <property type="match status" value="1"/>
</dbReference>
<dbReference type="Pfam" id="PF00156">
    <property type="entry name" value="Pribosyltran"/>
    <property type="match status" value="1"/>
</dbReference>
<dbReference type="SUPFAM" id="SSF53271">
    <property type="entry name" value="PRTase-like"/>
    <property type="match status" value="1"/>
</dbReference>
<dbReference type="PROSITE" id="PS00103">
    <property type="entry name" value="PUR_PYR_PR_TRANSFER"/>
    <property type="match status" value="1"/>
</dbReference>
<reference key="1">
    <citation type="journal article" date="2009" name="PLoS Genet.">
        <title>Organised genome dynamics in the Escherichia coli species results in highly diverse adaptive paths.</title>
        <authorList>
            <person name="Touchon M."/>
            <person name="Hoede C."/>
            <person name="Tenaillon O."/>
            <person name="Barbe V."/>
            <person name="Baeriswyl S."/>
            <person name="Bidet P."/>
            <person name="Bingen E."/>
            <person name="Bonacorsi S."/>
            <person name="Bouchier C."/>
            <person name="Bouvet O."/>
            <person name="Calteau A."/>
            <person name="Chiapello H."/>
            <person name="Clermont O."/>
            <person name="Cruveiller S."/>
            <person name="Danchin A."/>
            <person name="Diard M."/>
            <person name="Dossat C."/>
            <person name="Karoui M.E."/>
            <person name="Frapy E."/>
            <person name="Garry L."/>
            <person name="Ghigo J.M."/>
            <person name="Gilles A.M."/>
            <person name="Johnson J."/>
            <person name="Le Bouguenec C."/>
            <person name="Lescat M."/>
            <person name="Mangenot S."/>
            <person name="Martinez-Jehanne V."/>
            <person name="Matic I."/>
            <person name="Nassif X."/>
            <person name="Oztas S."/>
            <person name="Petit M.A."/>
            <person name="Pichon C."/>
            <person name="Rouy Z."/>
            <person name="Ruf C.S."/>
            <person name="Schneider D."/>
            <person name="Tourret J."/>
            <person name="Vacherie B."/>
            <person name="Vallenet D."/>
            <person name="Medigue C."/>
            <person name="Rocha E.P.C."/>
            <person name="Denamur E."/>
        </authorList>
    </citation>
    <scope>NUCLEOTIDE SEQUENCE [LARGE SCALE GENOMIC DNA]</scope>
    <source>
        <strain>55989 / EAEC</strain>
    </source>
</reference>
<organism>
    <name type="scientific">Escherichia coli (strain 55989 / EAEC)</name>
    <dbReference type="NCBI Taxonomy" id="585055"/>
    <lineage>
        <taxon>Bacteria</taxon>
        <taxon>Pseudomonadati</taxon>
        <taxon>Pseudomonadota</taxon>
        <taxon>Gammaproteobacteria</taxon>
        <taxon>Enterobacterales</taxon>
        <taxon>Enterobacteriaceae</taxon>
        <taxon>Escherichia</taxon>
    </lineage>
</organism>
<accession>B7L766</accession>
<feature type="chain" id="PRO_1000164681" description="Orotate phosphoribosyltransferase">
    <location>
        <begin position="1"/>
        <end position="213"/>
    </location>
</feature>
<feature type="binding site" description="in other chain" evidence="1">
    <location>
        <position position="26"/>
    </location>
    <ligand>
        <name>5-phospho-alpha-D-ribose 1-diphosphate</name>
        <dbReference type="ChEBI" id="CHEBI:58017"/>
        <note>ligand shared between dimeric partners</note>
    </ligand>
</feature>
<feature type="binding site" evidence="1">
    <location>
        <begin position="34"/>
        <end position="35"/>
    </location>
    <ligand>
        <name>orotate</name>
        <dbReference type="ChEBI" id="CHEBI:30839"/>
    </ligand>
</feature>
<feature type="binding site" description="in other chain" evidence="1">
    <location>
        <begin position="72"/>
        <end position="73"/>
    </location>
    <ligand>
        <name>5-phospho-alpha-D-ribose 1-diphosphate</name>
        <dbReference type="ChEBI" id="CHEBI:58017"/>
        <note>ligand shared between dimeric partners</note>
    </ligand>
</feature>
<feature type="binding site" evidence="1">
    <location>
        <position position="99"/>
    </location>
    <ligand>
        <name>5-phospho-alpha-D-ribose 1-diphosphate</name>
        <dbReference type="ChEBI" id="CHEBI:58017"/>
        <note>ligand shared between dimeric partners</note>
    </ligand>
</feature>
<feature type="binding site" description="in other chain" evidence="1">
    <location>
        <position position="100"/>
    </location>
    <ligand>
        <name>5-phospho-alpha-D-ribose 1-diphosphate</name>
        <dbReference type="ChEBI" id="CHEBI:58017"/>
        <note>ligand shared between dimeric partners</note>
    </ligand>
</feature>
<feature type="binding site" evidence="1">
    <location>
        <position position="103"/>
    </location>
    <ligand>
        <name>5-phospho-alpha-D-ribose 1-diphosphate</name>
        <dbReference type="ChEBI" id="CHEBI:58017"/>
        <note>ligand shared between dimeric partners</note>
    </ligand>
</feature>
<feature type="binding site" evidence="1">
    <location>
        <position position="105"/>
    </location>
    <ligand>
        <name>5-phospho-alpha-D-ribose 1-diphosphate</name>
        <dbReference type="ChEBI" id="CHEBI:58017"/>
        <note>ligand shared between dimeric partners</note>
    </ligand>
</feature>
<feature type="binding site" description="in other chain" evidence="1">
    <location>
        <begin position="124"/>
        <end position="132"/>
    </location>
    <ligand>
        <name>5-phospho-alpha-D-ribose 1-diphosphate</name>
        <dbReference type="ChEBI" id="CHEBI:58017"/>
        <note>ligand shared between dimeric partners</note>
    </ligand>
</feature>
<feature type="binding site" evidence="1">
    <location>
        <position position="128"/>
    </location>
    <ligand>
        <name>orotate</name>
        <dbReference type="ChEBI" id="CHEBI:30839"/>
    </ligand>
</feature>
<feature type="binding site" evidence="1">
    <location>
        <position position="156"/>
    </location>
    <ligand>
        <name>orotate</name>
        <dbReference type="ChEBI" id="CHEBI:30839"/>
    </ligand>
</feature>
<proteinExistence type="inferred from homology"/>
<evidence type="ECO:0000255" key="1">
    <source>
        <dbReference type="HAMAP-Rule" id="MF_01208"/>
    </source>
</evidence>
<name>PYRE_ECO55</name>
<protein>
    <recommendedName>
        <fullName evidence="1">Orotate phosphoribosyltransferase</fullName>
        <shortName evidence="1">OPRT</shortName>
        <shortName evidence="1">OPRTase</shortName>
        <ecNumber evidence="1">2.4.2.10</ecNumber>
    </recommendedName>
</protein>
<comment type="function">
    <text evidence="1">Catalyzes the transfer of a ribosyl phosphate group from 5-phosphoribose 1-diphosphate to orotate, leading to the formation of orotidine monophosphate (OMP).</text>
</comment>
<comment type="catalytic activity">
    <reaction evidence="1">
        <text>orotidine 5'-phosphate + diphosphate = orotate + 5-phospho-alpha-D-ribose 1-diphosphate</text>
        <dbReference type="Rhea" id="RHEA:10380"/>
        <dbReference type="ChEBI" id="CHEBI:30839"/>
        <dbReference type="ChEBI" id="CHEBI:33019"/>
        <dbReference type="ChEBI" id="CHEBI:57538"/>
        <dbReference type="ChEBI" id="CHEBI:58017"/>
        <dbReference type="EC" id="2.4.2.10"/>
    </reaction>
</comment>
<comment type="cofactor">
    <cofactor evidence="1">
        <name>Mg(2+)</name>
        <dbReference type="ChEBI" id="CHEBI:18420"/>
    </cofactor>
</comment>
<comment type="pathway">
    <text evidence="1">Pyrimidine metabolism; UMP biosynthesis via de novo pathway; UMP from orotate: step 1/2.</text>
</comment>
<comment type="subunit">
    <text evidence="1">Homodimer.</text>
</comment>
<comment type="similarity">
    <text evidence="1">Belongs to the purine/pyrimidine phosphoribosyltransferase family. PyrE subfamily.</text>
</comment>
<sequence length="213" mass="23567">MKPYQRQFIEFALSKQVLKFGEFTLKSGRKSPYFFNAGLFNTGRDLALLGRFYAEALVDSGIEFDLLFGPAYKGIPIATTTAVALAEHHDLDLPYCFNRKEAKDHGEGGNLVGSALQGRVMLVDDVITAGTAIRESMEIIQANGATLAGVLISLDRQERGRGEISAIQEVERDYNCKVISIITLKDLIAYLEEKPEMAEHLAAVKAYREEFGV</sequence>
<gene>
    <name evidence="1" type="primary">pyrE</name>
    <name type="ordered locus">EC55989_4107</name>
</gene>
<keyword id="KW-0328">Glycosyltransferase</keyword>
<keyword id="KW-0460">Magnesium</keyword>
<keyword id="KW-0665">Pyrimidine biosynthesis</keyword>
<keyword id="KW-1185">Reference proteome</keyword>
<keyword id="KW-0808">Transferase</keyword>